<feature type="chain" id="PRO_0000302502" description="ATP-dependent dethiobiotin synthetase BioD">
    <location>
        <begin position="1"/>
        <end position="220"/>
    </location>
</feature>
<feature type="active site" evidence="1">
    <location>
        <position position="37"/>
    </location>
</feature>
<feature type="binding site" evidence="1">
    <location>
        <begin position="12"/>
        <end position="17"/>
    </location>
    <ligand>
        <name>ATP</name>
        <dbReference type="ChEBI" id="CHEBI:30616"/>
    </ligand>
</feature>
<feature type="binding site" evidence="1">
    <location>
        <position position="16"/>
    </location>
    <ligand>
        <name>Mg(2+)</name>
        <dbReference type="ChEBI" id="CHEBI:18420"/>
    </ligand>
</feature>
<feature type="binding site" evidence="1">
    <location>
        <position position="41"/>
    </location>
    <ligand>
        <name>substrate</name>
    </ligand>
</feature>
<feature type="binding site" evidence="1">
    <location>
        <position position="49"/>
    </location>
    <ligand>
        <name>ATP</name>
        <dbReference type="ChEBI" id="CHEBI:30616"/>
    </ligand>
</feature>
<feature type="binding site" evidence="1">
    <location>
        <position position="49"/>
    </location>
    <ligand>
        <name>Mg(2+)</name>
        <dbReference type="ChEBI" id="CHEBI:18420"/>
    </ligand>
</feature>
<feature type="binding site" evidence="1">
    <location>
        <begin position="107"/>
        <end position="110"/>
    </location>
    <ligand>
        <name>ATP</name>
        <dbReference type="ChEBI" id="CHEBI:30616"/>
    </ligand>
</feature>
<feature type="binding site" evidence="1">
    <location>
        <position position="107"/>
    </location>
    <ligand>
        <name>Mg(2+)</name>
        <dbReference type="ChEBI" id="CHEBI:18420"/>
    </ligand>
</feature>
<feature type="binding site" evidence="1">
    <location>
        <begin position="167"/>
        <end position="168"/>
    </location>
    <ligand>
        <name>ATP</name>
        <dbReference type="ChEBI" id="CHEBI:30616"/>
    </ligand>
</feature>
<feature type="binding site" evidence="1">
    <location>
        <begin position="197"/>
        <end position="199"/>
    </location>
    <ligand>
        <name>ATP</name>
        <dbReference type="ChEBI" id="CHEBI:30616"/>
    </ligand>
</feature>
<comment type="function">
    <text evidence="1">Catalyzes a mechanistically unusual reaction, the ATP-dependent insertion of CO2 between the N7 and N8 nitrogen atoms of 7,8-diaminopelargonic acid (DAPA, also called 7,8-diammoniononanoate) to form a ureido ring.</text>
</comment>
<comment type="catalytic activity">
    <reaction evidence="1">
        <text>(7R,8S)-7,8-diammoniononanoate + CO2 + ATP = (4R,5S)-dethiobiotin + ADP + phosphate + 3 H(+)</text>
        <dbReference type="Rhea" id="RHEA:15805"/>
        <dbReference type="ChEBI" id="CHEBI:15378"/>
        <dbReference type="ChEBI" id="CHEBI:16526"/>
        <dbReference type="ChEBI" id="CHEBI:30616"/>
        <dbReference type="ChEBI" id="CHEBI:43474"/>
        <dbReference type="ChEBI" id="CHEBI:149469"/>
        <dbReference type="ChEBI" id="CHEBI:149473"/>
        <dbReference type="ChEBI" id="CHEBI:456216"/>
        <dbReference type="EC" id="6.3.3.3"/>
    </reaction>
</comment>
<comment type="cofactor">
    <cofactor evidence="1">
        <name>Mg(2+)</name>
        <dbReference type="ChEBI" id="CHEBI:18420"/>
    </cofactor>
</comment>
<comment type="pathway">
    <text evidence="1">Cofactor biosynthesis; biotin biosynthesis; biotin from 7,8-diaminononanoate: step 1/2.</text>
</comment>
<comment type="subunit">
    <text evidence="1">Homodimer.</text>
</comment>
<comment type="subcellular location">
    <subcellularLocation>
        <location evidence="1">Cytoplasm</location>
    </subcellularLocation>
</comment>
<comment type="similarity">
    <text evidence="1">Belongs to the dethiobiotin synthetase family.</text>
</comment>
<organism>
    <name type="scientific">Corynebacterium efficiens (strain DSM 44549 / YS-314 / AJ 12310 / JCM 11189 / NBRC 100395)</name>
    <dbReference type="NCBI Taxonomy" id="196164"/>
    <lineage>
        <taxon>Bacteria</taxon>
        <taxon>Bacillati</taxon>
        <taxon>Actinomycetota</taxon>
        <taxon>Actinomycetes</taxon>
        <taxon>Mycobacteriales</taxon>
        <taxon>Corynebacteriaceae</taxon>
        <taxon>Corynebacterium</taxon>
    </lineage>
</organism>
<evidence type="ECO:0000255" key="1">
    <source>
        <dbReference type="HAMAP-Rule" id="MF_00336"/>
    </source>
</evidence>
<reference key="1">
    <citation type="journal article" date="2003" name="Genome Res.">
        <title>Comparative complete genome sequence analysis of the amino acid replacements responsible for the thermostability of Corynebacterium efficiens.</title>
        <authorList>
            <person name="Nishio Y."/>
            <person name="Nakamura Y."/>
            <person name="Kawarabayasi Y."/>
            <person name="Usuda Y."/>
            <person name="Kimura E."/>
            <person name="Sugimoto S."/>
            <person name="Matsui K."/>
            <person name="Yamagishi A."/>
            <person name="Kikuchi H."/>
            <person name="Ikeo K."/>
            <person name="Gojobori T."/>
        </authorList>
    </citation>
    <scope>NUCLEOTIDE SEQUENCE [LARGE SCALE GENOMIC DNA]</scope>
    <source>
        <strain>DSM 44549 / YS-314 / AJ 12310 / JCM 11189 / NBRC 100395</strain>
    </source>
</reference>
<name>BIOD_COREF</name>
<keyword id="KW-0067">ATP-binding</keyword>
<keyword id="KW-0093">Biotin biosynthesis</keyword>
<keyword id="KW-0963">Cytoplasm</keyword>
<keyword id="KW-0436">Ligase</keyword>
<keyword id="KW-0460">Magnesium</keyword>
<keyword id="KW-0479">Metal-binding</keyword>
<keyword id="KW-0547">Nucleotide-binding</keyword>
<keyword id="KW-1185">Reference proteome</keyword>
<proteinExistence type="inferred from homology"/>
<dbReference type="EC" id="6.3.3.3" evidence="1"/>
<dbReference type="EMBL" id="BA000035">
    <property type="protein sequence ID" value="BAC18230.1"/>
    <property type="molecule type" value="Genomic_DNA"/>
</dbReference>
<dbReference type="RefSeq" id="WP_006769383.1">
    <property type="nucleotide sequence ID" value="NC_004369.1"/>
</dbReference>
<dbReference type="SMR" id="Q8FPS0"/>
<dbReference type="STRING" id="196164.gene:10741834"/>
<dbReference type="KEGG" id="cef:CE1420"/>
<dbReference type="eggNOG" id="COG0132">
    <property type="taxonomic scope" value="Bacteria"/>
</dbReference>
<dbReference type="HOGENOM" id="CLU_072551_1_1_11"/>
<dbReference type="OrthoDB" id="9802610at2"/>
<dbReference type="UniPathway" id="UPA00078">
    <property type="reaction ID" value="UER00161"/>
</dbReference>
<dbReference type="Proteomes" id="UP000001409">
    <property type="component" value="Chromosome"/>
</dbReference>
<dbReference type="GO" id="GO:0005829">
    <property type="term" value="C:cytosol"/>
    <property type="evidence" value="ECO:0007669"/>
    <property type="project" value="TreeGrafter"/>
</dbReference>
<dbReference type="GO" id="GO:0005524">
    <property type="term" value="F:ATP binding"/>
    <property type="evidence" value="ECO:0007669"/>
    <property type="project" value="UniProtKB-UniRule"/>
</dbReference>
<dbReference type="GO" id="GO:0004141">
    <property type="term" value="F:dethiobiotin synthase activity"/>
    <property type="evidence" value="ECO:0007669"/>
    <property type="project" value="UniProtKB-UniRule"/>
</dbReference>
<dbReference type="GO" id="GO:0000287">
    <property type="term" value="F:magnesium ion binding"/>
    <property type="evidence" value="ECO:0007669"/>
    <property type="project" value="UniProtKB-UniRule"/>
</dbReference>
<dbReference type="GO" id="GO:0009102">
    <property type="term" value="P:biotin biosynthetic process"/>
    <property type="evidence" value="ECO:0007669"/>
    <property type="project" value="UniProtKB-UniRule"/>
</dbReference>
<dbReference type="CDD" id="cd03109">
    <property type="entry name" value="DTBS"/>
    <property type="match status" value="1"/>
</dbReference>
<dbReference type="Gene3D" id="3.40.50.300">
    <property type="entry name" value="P-loop containing nucleotide triphosphate hydrolases"/>
    <property type="match status" value="1"/>
</dbReference>
<dbReference type="HAMAP" id="MF_00336">
    <property type="entry name" value="BioD"/>
    <property type="match status" value="1"/>
</dbReference>
<dbReference type="InterPro" id="IPR004472">
    <property type="entry name" value="DTB_synth_BioD"/>
</dbReference>
<dbReference type="InterPro" id="IPR027417">
    <property type="entry name" value="P-loop_NTPase"/>
</dbReference>
<dbReference type="NCBIfam" id="TIGR00347">
    <property type="entry name" value="bioD"/>
    <property type="match status" value="1"/>
</dbReference>
<dbReference type="PANTHER" id="PTHR43210">
    <property type="entry name" value="DETHIOBIOTIN SYNTHETASE"/>
    <property type="match status" value="1"/>
</dbReference>
<dbReference type="PANTHER" id="PTHR43210:SF5">
    <property type="entry name" value="DETHIOBIOTIN SYNTHETASE"/>
    <property type="match status" value="1"/>
</dbReference>
<dbReference type="Pfam" id="PF13500">
    <property type="entry name" value="AAA_26"/>
    <property type="match status" value="1"/>
</dbReference>
<dbReference type="PIRSF" id="PIRSF006755">
    <property type="entry name" value="DTB_synth"/>
    <property type="match status" value="1"/>
</dbReference>
<dbReference type="SUPFAM" id="SSF52540">
    <property type="entry name" value="P-loop containing nucleoside triphosphate hydrolases"/>
    <property type="match status" value="1"/>
</dbReference>
<gene>
    <name evidence="1" type="primary">bioD</name>
    <name type="ordered locus">CE1420</name>
</gene>
<accession>Q8FPS0</accession>
<sequence length="220" mass="22720">MSILFISGTGTDVGKTIATAALASAFHHRGDRVIPVKPVQTGEPDGRGDIHTVEKLSGIRGVEFTRYPDPLAPNLAARRAGLPQVTLPDLAREIRDLDAPDRIVLVEGAGGVLVRLADDLTLLDVAAELDAPLVLVTSLGLGSLNAAELSVQAARTAGVEVLGLIGGSASPDPGLAEQLNHGELTRICRVPLLGVLPAGAGDLLPDDFQAMAQSCLTLPL</sequence>
<protein>
    <recommendedName>
        <fullName evidence="1">ATP-dependent dethiobiotin synthetase BioD</fullName>
        <ecNumber evidence="1">6.3.3.3</ecNumber>
    </recommendedName>
    <alternativeName>
        <fullName evidence="1">DTB synthetase</fullName>
        <shortName evidence="1">DTBS</shortName>
    </alternativeName>
    <alternativeName>
        <fullName evidence="1">Dethiobiotin synthase</fullName>
    </alternativeName>
</protein>